<proteinExistence type="inferred from homology"/>
<keyword id="KW-0028">Amino-acid biosynthesis</keyword>
<keyword id="KW-0032">Aminotransferase</keyword>
<keyword id="KW-0963">Cytoplasm</keyword>
<keyword id="KW-0663">Pyridoxal phosphate</keyword>
<keyword id="KW-0664">Pyridoxine biosynthesis</keyword>
<keyword id="KW-1185">Reference proteome</keyword>
<keyword id="KW-0718">Serine biosynthesis</keyword>
<keyword id="KW-0808">Transferase</keyword>
<sequence length="373" mass="43000">MIMNDTTKVYNFSAGPAMIPREVLCQVKRELYNWKNLKKSIMEISHRSQEFISVVQEIKHNLRKLLHIPNSYKIVFCHGGARGQFSAIPMNFSKNANHSSHNNVVDYINSGYWSYSAALEAKKYCYTNILNVCKTNNKKQYILPMNTWEINDNSLYLHYCPNETIDGIAIHEEPKFNDKKIVIGDFSSTILSKRINLERYSFIYASSQKNIGPSGITLIIMHESLLQNINSYVPSILNYKILVNSNSMFNTPNTFSLYLSGLILKWIKKIGGIKEIEKRNIIKSNMLYNMIDSTDFYINDVVSNNRSRMNVPFTIINTKLHEIFVKEAYKYGLHALKGHNLKGGIRASIYNAMPIKGVLKLINFMKIFEKKYG</sequence>
<reference key="1">
    <citation type="journal article" date="2003" name="Proc. Natl. Acad. Sci. U.S.A.">
        <title>Reductive genome evolution in Buchnera aphidicola.</title>
        <authorList>
            <person name="van Ham R.C.H.J."/>
            <person name="Kamerbeek J."/>
            <person name="Palacios C."/>
            <person name="Rausell C."/>
            <person name="Abascal F."/>
            <person name="Bastolla U."/>
            <person name="Fernandez J.M."/>
            <person name="Jimenez L."/>
            <person name="Postigo M."/>
            <person name="Silva F.J."/>
            <person name="Tamames J."/>
            <person name="Viguera E."/>
            <person name="Latorre A."/>
            <person name="Valencia A."/>
            <person name="Moran F."/>
            <person name="Moya A."/>
        </authorList>
    </citation>
    <scope>NUCLEOTIDE SEQUENCE [LARGE SCALE GENOMIC DNA]</scope>
    <source>
        <strain>Bp</strain>
    </source>
</reference>
<accession>P59492</accession>
<gene>
    <name evidence="1" type="primary">serC</name>
    <name type="ordered locus">bbp_289</name>
</gene>
<protein>
    <recommendedName>
        <fullName evidence="1">Phosphoserine aminotransferase</fullName>
        <ecNumber evidence="1">2.6.1.52</ecNumber>
    </recommendedName>
    <alternativeName>
        <fullName evidence="1">Phosphohydroxythreonine aminotransferase</fullName>
        <shortName evidence="1">PSAT</shortName>
    </alternativeName>
</protein>
<evidence type="ECO:0000255" key="1">
    <source>
        <dbReference type="HAMAP-Rule" id="MF_00160"/>
    </source>
</evidence>
<dbReference type="EC" id="2.6.1.52" evidence="1"/>
<dbReference type="EMBL" id="AE016826">
    <property type="protein sequence ID" value="AAO27014.1"/>
    <property type="molecule type" value="Genomic_DNA"/>
</dbReference>
<dbReference type="RefSeq" id="WP_011091415.1">
    <property type="nucleotide sequence ID" value="NC_004545.1"/>
</dbReference>
<dbReference type="SMR" id="P59492"/>
<dbReference type="STRING" id="224915.bbp_289"/>
<dbReference type="KEGG" id="bab:bbp_289"/>
<dbReference type="eggNOG" id="COG1932">
    <property type="taxonomic scope" value="Bacteria"/>
</dbReference>
<dbReference type="HOGENOM" id="CLU_034866_0_2_6"/>
<dbReference type="OrthoDB" id="9809412at2"/>
<dbReference type="UniPathway" id="UPA00135">
    <property type="reaction ID" value="UER00197"/>
</dbReference>
<dbReference type="UniPathway" id="UPA00244">
    <property type="reaction ID" value="UER00311"/>
</dbReference>
<dbReference type="Proteomes" id="UP000000601">
    <property type="component" value="Chromosome"/>
</dbReference>
<dbReference type="GO" id="GO:0005737">
    <property type="term" value="C:cytoplasm"/>
    <property type="evidence" value="ECO:0007669"/>
    <property type="project" value="UniProtKB-SubCell"/>
</dbReference>
<dbReference type="GO" id="GO:0004648">
    <property type="term" value="F:O-phospho-L-serine:2-oxoglutarate aminotransferase activity"/>
    <property type="evidence" value="ECO:0007669"/>
    <property type="project" value="UniProtKB-UniRule"/>
</dbReference>
<dbReference type="GO" id="GO:0030170">
    <property type="term" value="F:pyridoxal phosphate binding"/>
    <property type="evidence" value="ECO:0007669"/>
    <property type="project" value="UniProtKB-UniRule"/>
</dbReference>
<dbReference type="GO" id="GO:0006564">
    <property type="term" value="P:L-serine biosynthetic process"/>
    <property type="evidence" value="ECO:0007669"/>
    <property type="project" value="UniProtKB-UniRule"/>
</dbReference>
<dbReference type="GO" id="GO:0008615">
    <property type="term" value="P:pyridoxine biosynthetic process"/>
    <property type="evidence" value="ECO:0007669"/>
    <property type="project" value="UniProtKB-UniRule"/>
</dbReference>
<dbReference type="FunFam" id="3.40.640.10:FF:000010">
    <property type="entry name" value="Phosphoserine aminotransferase"/>
    <property type="match status" value="1"/>
</dbReference>
<dbReference type="FunFam" id="3.90.1150.10:FF:000006">
    <property type="entry name" value="Phosphoserine aminotransferase"/>
    <property type="match status" value="1"/>
</dbReference>
<dbReference type="Gene3D" id="3.90.1150.10">
    <property type="entry name" value="Aspartate Aminotransferase, domain 1"/>
    <property type="match status" value="1"/>
</dbReference>
<dbReference type="Gene3D" id="3.40.640.10">
    <property type="entry name" value="Type I PLP-dependent aspartate aminotransferase-like (Major domain)"/>
    <property type="match status" value="1"/>
</dbReference>
<dbReference type="HAMAP" id="MF_00160">
    <property type="entry name" value="SerC_aminotrans_5"/>
    <property type="match status" value="1"/>
</dbReference>
<dbReference type="InterPro" id="IPR000192">
    <property type="entry name" value="Aminotrans_V_dom"/>
</dbReference>
<dbReference type="InterPro" id="IPR022278">
    <property type="entry name" value="Pser_aminoTfrase"/>
</dbReference>
<dbReference type="InterPro" id="IPR015424">
    <property type="entry name" value="PyrdxlP-dep_Trfase"/>
</dbReference>
<dbReference type="InterPro" id="IPR015421">
    <property type="entry name" value="PyrdxlP-dep_Trfase_major"/>
</dbReference>
<dbReference type="InterPro" id="IPR015422">
    <property type="entry name" value="PyrdxlP-dep_Trfase_small"/>
</dbReference>
<dbReference type="NCBIfam" id="NF003764">
    <property type="entry name" value="PRK05355.1"/>
    <property type="match status" value="1"/>
</dbReference>
<dbReference type="NCBIfam" id="TIGR01364">
    <property type="entry name" value="serC_1"/>
    <property type="match status" value="1"/>
</dbReference>
<dbReference type="PANTHER" id="PTHR43247">
    <property type="entry name" value="PHOSPHOSERINE AMINOTRANSFERASE"/>
    <property type="match status" value="1"/>
</dbReference>
<dbReference type="PANTHER" id="PTHR43247:SF1">
    <property type="entry name" value="PHOSPHOSERINE AMINOTRANSFERASE"/>
    <property type="match status" value="1"/>
</dbReference>
<dbReference type="Pfam" id="PF00266">
    <property type="entry name" value="Aminotran_5"/>
    <property type="match status" value="1"/>
</dbReference>
<dbReference type="PIRSF" id="PIRSF000525">
    <property type="entry name" value="SerC"/>
    <property type="match status" value="1"/>
</dbReference>
<dbReference type="SUPFAM" id="SSF53383">
    <property type="entry name" value="PLP-dependent transferases"/>
    <property type="match status" value="1"/>
</dbReference>
<feature type="chain" id="PRO_0000150160" description="Phosphoserine aminotransferase">
    <location>
        <begin position="1"/>
        <end position="373"/>
    </location>
</feature>
<feature type="binding site" evidence="1">
    <location>
        <position position="47"/>
    </location>
    <ligand>
        <name>L-glutamate</name>
        <dbReference type="ChEBI" id="CHEBI:29985"/>
    </ligand>
</feature>
<feature type="binding site" evidence="1">
    <location>
        <begin position="81"/>
        <end position="82"/>
    </location>
    <ligand>
        <name>pyridoxal 5'-phosphate</name>
        <dbReference type="ChEBI" id="CHEBI:597326"/>
    </ligand>
</feature>
<feature type="binding site" evidence="1">
    <location>
        <position position="113"/>
    </location>
    <ligand>
        <name>pyridoxal 5'-phosphate</name>
        <dbReference type="ChEBI" id="CHEBI:597326"/>
    </ligand>
</feature>
<feature type="binding site" evidence="1">
    <location>
        <position position="164"/>
    </location>
    <ligand>
        <name>pyridoxal 5'-phosphate</name>
        <dbReference type="ChEBI" id="CHEBI:597326"/>
    </ligand>
</feature>
<feature type="binding site" evidence="1">
    <location>
        <position position="185"/>
    </location>
    <ligand>
        <name>pyridoxal 5'-phosphate</name>
        <dbReference type="ChEBI" id="CHEBI:597326"/>
    </ligand>
</feature>
<feature type="binding site" evidence="1">
    <location>
        <position position="208"/>
    </location>
    <ligand>
        <name>pyridoxal 5'-phosphate</name>
        <dbReference type="ChEBI" id="CHEBI:597326"/>
    </ligand>
</feature>
<feature type="binding site" evidence="1">
    <location>
        <begin position="250"/>
        <end position="251"/>
    </location>
    <ligand>
        <name>pyridoxal 5'-phosphate</name>
        <dbReference type="ChEBI" id="CHEBI:597326"/>
    </ligand>
</feature>
<feature type="modified residue" description="N6-(pyridoxal phosphate)lysine" evidence="1">
    <location>
        <position position="209"/>
    </location>
</feature>
<name>SERC_BUCBP</name>
<comment type="function">
    <text evidence="1">Catalyzes the reversible conversion of 3-phosphohydroxypyruvate to phosphoserine and of 3-hydroxy-2-oxo-4-phosphonooxybutanoate to phosphohydroxythreonine.</text>
</comment>
<comment type="catalytic activity">
    <reaction evidence="1">
        <text>O-phospho-L-serine + 2-oxoglutarate = 3-phosphooxypyruvate + L-glutamate</text>
        <dbReference type="Rhea" id="RHEA:14329"/>
        <dbReference type="ChEBI" id="CHEBI:16810"/>
        <dbReference type="ChEBI" id="CHEBI:18110"/>
        <dbReference type="ChEBI" id="CHEBI:29985"/>
        <dbReference type="ChEBI" id="CHEBI:57524"/>
        <dbReference type="EC" id="2.6.1.52"/>
    </reaction>
</comment>
<comment type="catalytic activity">
    <reaction evidence="1">
        <text>4-(phosphooxy)-L-threonine + 2-oxoglutarate = (R)-3-hydroxy-2-oxo-4-phosphooxybutanoate + L-glutamate</text>
        <dbReference type="Rhea" id="RHEA:16573"/>
        <dbReference type="ChEBI" id="CHEBI:16810"/>
        <dbReference type="ChEBI" id="CHEBI:29985"/>
        <dbReference type="ChEBI" id="CHEBI:58452"/>
        <dbReference type="ChEBI" id="CHEBI:58538"/>
        <dbReference type="EC" id="2.6.1.52"/>
    </reaction>
</comment>
<comment type="cofactor">
    <cofactor evidence="1">
        <name>pyridoxal 5'-phosphate</name>
        <dbReference type="ChEBI" id="CHEBI:597326"/>
    </cofactor>
    <text evidence="1">Binds 1 pyridoxal phosphate per subunit.</text>
</comment>
<comment type="pathway">
    <text evidence="1">Amino-acid biosynthesis; L-serine biosynthesis; L-serine from 3-phospho-D-glycerate: step 2/3.</text>
</comment>
<comment type="pathway">
    <text evidence="1">Cofactor biosynthesis; pyridoxine 5'-phosphate biosynthesis; pyridoxine 5'-phosphate from D-erythrose 4-phosphate: step 3/5.</text>
</comment>
<comment type="subunit">
    <text evidence="1">Homodimer.</text>
</comment>
<comment type="subcellular location">
    <subcellularLocation>
        <location evidence="1">Cytoplasm</location>
    </subcellularLocation>
</comment>
<comment type="similarity">
    <text evidence="1">Belongs to the class-V pyridoxal-phosphate-dependent aminotransferase family. SerC subfamily.</text>
</comment>
<organism>
    <name type="scientific">Buchnera aphidicola subsp. Baizongia pistaciae (strain Bp)</name>
    <dbReference type="NCBI Taxonomy" id="224915"/>
    <lineage>
        <taxon>Bacteria</taxon>
        <taxon>Pseudomonadati</taxon>
        <taxon>Pseudomonadota</taxon>
        <taxon>Gammaproteobacteria</taxon>
        <taxon>Enterobacterales</taxon>
        <taxon>Erwiniaceae</taxon>
        <taxon>Buchnera</taxon>
    </lineage>
</organism>